<reference key="1">
    <citation type="journal article" date="2008" name="PLoS Genet.">
        <title>Complete genome sequence of the N2-fixing broad host range endophyte Klebsiella pneumoniae 342 and virulence predictions verified in mice.</title>
        <authorList>
            <person name="Fouts D.E."/>
            <person name="Tyler H.L."/>
            <person name="DeBoy R.T."/>
            <person name="Daugherty S."/>
            <person name="Ren Q."/>
            <person name="Badger J.H."/>
            <person name="Durkin A.S."/>
            <person name="Huot H."/>
            <person name="Shrivastava S."/>
            <person name="Kothari S."/>
            <person name="Dodson R.J."/>
            <person name="Mohamoud Y."/>
            <person name="Khouri H."/>
            <person name="Roesch L.F.W."/>
            <person name="Krogfelt K.A."/>
            <person name="Struve C."/>
            <person name="Triplett E.W."/>
            <person name="Methe B.A."/>
        </authorList>
    </citation>
    <scope>NUCLEOTIDE SEQUENCE [LARGE SCALE GENOMIC DNA]</scope>
    <source>
        <strain>342</strain>
    </source>
</reference>
<gene>
    <name evidence="1" type="primary">iolG</name>
    <name type="ordered locus">KPK_4990</name>
</gene>
<dbReference type="EC" id="1.1.1.18" evidence="1"/>
<dbReference type="EMBL" id="CP000964">
    <property type="protein sequence ID" value="ACI11005.1"/>
    <property type="molecule type" value="Genomic_DNA"/>
</dbReference>
<dbReference type="SMR" id="B5Y2S5"/>
<dbReference type="KEGG" id="kpe:KPK_4990"/>
<dbReference type="HOGENOM" id="CLU_023194_0_1_6"/>
<dbReference type="Proteomes" id="UP000001734">
    <property type="component" value="Chromosome"/>
</dbReference>
<dbReference type="GO" id="GO:0050112">
    <property type="term" value="F:inositol 2-dehydrogenase (NAD+) activity"/>
    <property type="evidence" value="ECO:0007669"/>
    <property type="project" value="UniProtKB-UniRule"/>
</dbReference>
<dbReference type="GO" id="GO:0000166">
    <property type="term" value="F:nucleotide binding"/>
    <property type="evidence" value="ECO:0007669"/>
    <property type="project" value="InterPro"/>
</dbReference>
<dbReference type="GO" id="GO:0019310">
    <property type="term" value="P:inositol catabolic process"/>
    <property type="evidence" value="ECO:0007669"/>
    <property type="project" value="UniProtKB-UniRule"/>
</dbReference>
<dbReference type="Gene3D" id="3.30.360.10">
    <property type="entry name" value="Dihydrodipicolinate Reductase, domain 2"/>
    <property type="match status" value="1"/>
</dbReference>
<dbReference type="Gene3D" id="3.40.50.720">
    <property type="entry name" value="NAD(P)-binding Rossmann-like Domain"/>
    <property type="match status" value="1"/>
</dbReference>
<dbReference type="HAMAP" id="MF_01671">
    <property type="entry name" value="IolG"/>
    <property type="match status" value="1"/>
</dbReference>
<dbReference type="InterPro" id="IPR050424">
    <property type="entry name" value="Gfo-Idh-MocA_inositol_DH"/>
</dbReference>
<dbReference type="InterPro" id="IPR004104">
    <property type="entry name" value="Gfo/Idh/MocA-like_OxRdtase_C"/>
</dbReference>
<dbReference type="InterPro" id="IPR000683">
    <property type="entry name" value="Gfo/Idh/MocA-like_OxRdtase_N"/>
</dbReference>
<dbReference type="InterPro" id="IPR023794">
    <property type="entry name" value="MI/DCI_dehydrogenase"/>
</dbReference>
<dbReference type="InterPro" id="IPR036291">
    <property type="entry name" value="NAD(P)-bd_dom_sf"/>
</dbReference>
<dbReference type="PANTHER" id="PTHR43593">
    <property type="match status" value="1"/>
</dbReference>
<dbReference type="PANTHER" id="PTHR43593:SF1">
    <property type="entry name" value="INOSITOL 2-DEHYDROGENASE"/>
    <property type="match status" value="1"/>
</dbReference>
<dbReference type="Pfam" id="PF01408">
    <property type="entry name" value="GFO_IDH_MocA"/>
    <property type="match status" value="1"/>
</dbReference>
<dbReference type="Pfam" id="PF02894">
    <property type="entry name" value="GFO_IDH_MocA_C"/>
    <property type="match status" value="1"/>
</dbReference>
<dbReference type="SUPFAM" id="SSF55347">
    <property type="entry name" value="Glyceraldehyde-3-phosphate dehydrogenase-like, C-terminal domain"/>
    <property type="match status" value="1"/>
</dbReference>
<dbReference type="SUPFAM" id="SSF51735">
    <property type="entry name" value="NAD(P)-binding Rossmann-fold domains"/>
    <property type="match status" value="1"/>
</dbReference>
<name>IOLG_KLEP3</name>
<organism>
    <name type="scientific">Klebsiella pneumoniae (strain 342)</name>
    <dbReference type="NCBI Taxonomy" id="507522"/>
    <lineage>
        <taxon>Bacteria</taxon>
        <taxon>Pseudomonadati</taxon>
        <taxon>Pseudomonadota</taxon>
        <taxon>Gammaproteobacteria</taxon>
        <taxon>Enterobacterales</taxon>
        <taxon>Enterobacteriaceae</taxon>
        <taxon>Klebsiella/Raoultella group</taxon>
        <taxon>Klebsiella</taxon>
        <taxon>Klebsiella pneumoniae complex</taxon>
    </lineage>
</organism>
<sequence>MSLKLGVIGAGAIGKEHIRRCTQVLQGATVVAVSDINADNARAAVALPGVQAEVYADGHDVINASDVDAILVTSWDPTHEEYTLAAIAAGKPVFCEKPLAMSAEGCRRIVDAEMKAGRRLVQVGFMRPYDEGYLALKKVIDDGDIGAPLMLRCAHRNQSVGENYTTDMAITNTLIHELDVLRWLLNDDYRSVQVRFPRSTSHTHARLKDPQIVSFETKKGTLIDVEVFVNCQYGYDIQCEVVGETGIARLPEPSAVQMRKSASLSTAILTDWKDRFIKAYDVELQAFINDVKAGQLHGPSAWDGYAASVAADACIKAQGTSEPVEVTLPECPAFYKR</sequence>
<proteinExistence type="inferred from homology"/>
<feature type="chain" id="PRO_1000187318" description="Inositol 2-dehydrogenase">
    <location>
        <begin position="1"/>
        <end position="337"/>
    </location>
</feature>
<accession>B5Y2S5</accession>
<evidence type="ECO:0000255" key="1">
    <source>
        <dbReference type="HAMAP-Rule" id="MF_01671"/>
    </source>
</evidence>
<comment type="function">
    <text evidence="1">Involved in the oxidation of myo-inositol (MI) to 2-keto-myo-inositol (2KMI or 2-inosose).</text>
</comment>
<comment type="catalytic activity">
    <reaction evidence="1">
        <text>myo-inositol + NAD(+) = scyllo-inosose + NADH + H(+)</text>
        <dbReference type="Rhea" id="RHEA:16949"/>
        <dbReference type="ChEBI" id="CHEBI:15378"/>
        <dbReference type="ChEBI" id="CHEBI:17268"/>
        <dbReference type="ChEBI" id="CHEBI:17811"/>
        <dbReference type="ChEBI" id="CHEBI:57540"/>
        <dbReference type="ChEBI" id="CHEBI:57945"/>
        <dbReference type="EC" id="1.1.1.18"/>
    </reaction>
</comment>
<comment type="subunit">
    <text evidence="1">Homotetramer.</text>
</comment>
<comment type="similarity">
    <text evidence="1">Belongs to the Gfo/Idh/MocA family.</text>
</comment>
<keyword id="KW-0520">NAD</keyword>
<keyword id="KW-0560">Oxidoreductase</keyword>
<protein>
    <recommendedName>
        <fullName evidence="1">Inositol 2-dehydrogenase</fullName>
        <ecNumber evidence="1">1.1.1.18</ecNumber>
    </recommendedName>
    <alternativeName>
        <fullName evidence="1">Myo-inositol 2-dehydrogenase</fullName>
        <shortName evidence="1">MI 2-dehydrogenase</shortName>
    </alternativeName>
</protein>